<protein>
    <recommendedName>
        <fullName evidence="5">U-actitoxin-Bgr3a</fullName>
        <shortName evidence="5">U-AITX-Bgr3a</shortName>
    </recommendedName>
    <alternativeName>
        <fullName evidence="4">U-AITX-Bg1b</fullName>
    </alternativeName>
</protein>
<sequence>MSAQRFLFLLVVTSLIAASLAAPKDVQLTKRGTPCWCGKTVGIYWFALYSCPGGHGYTGHCGQFMGVCCYPADP</sequence>
<feature type="signal peptide" evidence="2">
    <location>
        <begin position="1"/>
        <end position="21"/>
    </location>
</feature>
<feature type="propeptide" id="PRO_0000433587" evidence="3">
    <location>
        <begin position="22"/>
        <end position="29"/>
    </location>
</feature>
<feature type="chain" id="PRO_0000433588" description="U-actitoxin-Bgr3a" evidence="3">
    <location>
        <begin position="32"/>
        <end position="74"/>
    </location>
</feature>
<feature type="disulfide bond" evidence="1">
    <location>
        <begin position="35"/>
        <end position="68"/>
    </location>
</feature>
<feature type="disulfide bond" evidence="1">
    <location>
        <begin position="37"/>
        <end position="61"/>
    </location>
</feature>
<feature type="disulfide bond" evidence="1">
    <location>
        <begin position="51"/>
        <end position="69"/>
    </location>
</feature>
<name>BDS3A_BUNGR</name>
<proteinExistence type="evidence at protein level"/>
<keyword id="KW-0165">Cleavage on pair of basic residues</keyword>
<keyword id="KW-1015">Disulfide bond</keyword>
<keyword id="KW-0872">Ion channel impairing toxin</keyword>
<keyword id="KW-0166">Nematocyst</keyword>
<keyword id="KW-0528">Neurotoxin</keyword>
<keyword id="KW-0632">Potassium channel impairing toxin</keyword>
<keyword id="KW-0964">Secreted</keyword>
<keyword id="KW-0732">Signal</keyword>
<keyword id="KW-0800">Toxin</keyword>
<keyword id="KW-1220">Voltage-gated potassium channel impairing toxin</keyword>
<reference key="1">
    <citation type="journal article" date="2012" name="Peptides">
        <title>Peptide fingerprinting of the neurotoxic fractions isolated from the secretions of sea anemones Stichodactyla helianthus and Bunodosoma granulifera. New members of the APETx-like family identified by a 454 pyrosequencing approach.</title>
        <authorList>
            <person name="Rodriguez A.A."/>
            <person name="Cassoli J.S."/>
            <person name="Sa F."/>
            <person name="Dong Z.Q."/>
            <person name="de Freitas J.C."/>
            <person name="Pimenta A.M."/>
            <person name="de Lima M.E."/>
            <person name="Konno K."/>
            <person name="Lee S.M."/>
            <person name="Garateix A."/>
            <person name="Zaharenko A.J."/>
        </authorList>
    </citation>
    <scope>NUCLEOTIDE SEQUENCE [MRNA]</scope>
    <scope>MASS SPECTROMETRY</scope>
</reference>
<reference key="2">
    <citation type="journal article" date="2012" name="Toxicon">
        <title>Development of a rational nomenclature for naming peptide and protein toxins from sea anemones.</title>
        <authorList>
            <person name="Oliveira J.S."/>
            <person name="Fuentes-Silva D."/>
            <person name="King G.F."/>
        </authorList>
    </citation>
    <scope>NOMENCLATURE</scope>
</reference>
<organism>
    <name type="scientific">Bunodosoma granuliferum</name>
    <name type="common">Red warty sea anemone</name>
    <dbReference type="NCBI Taxonomy" id="31164"/>
    <lineage>
        <taxon>Eukaryota</taxon>
        <taxon>Metazoa</taxon>
        <taxon>Cnidaria</taxon>
        <taxon>Anthozoa</taxon>
        <taxon>Hexacorallia</taxon>
        <taxon>Actiniaria</taxon>
        <taxon>Actiniidae</taxon>
        <taxon>Bunodosoma</taxon>
    </lineage>
</organism>
<dbReference type="EMBL" id="HE577145">
    <property type="protein sequence ID" value="CCC86603.1"/>
    <property type="molecule type" value="mRNA"/>
</dbReference>
<dbReference type="SMR" id="G0W2H8"/>
<dbReference type="GO" id="GO:0005576">
    <property type="term" value="C:extracellular region"/>
    <property type="evidence" value="ECO:0007669"/>
    <property type="project" value="UniProtKB-SubCell"/>
</dbReference>
<dbReference type="GO" id="GO:0042151">
    <property type="term" value="C:nematocyst"/>
    <property type="evidence" value="ECO:0007669"/>
    <property type="project" value="UniProtKB-SubCell"/>
</dbReference>
<dbReference type="GO" id="GO:0008200">
    <property type="term" value="F:ion channel inhibitor activity"/>
    <property type="evidence" value="ECO:0007669"/>
    <property type="project" value="InterPro"/>
</dbReference>
<dbReference type="GO" id="GO:0015459">
    <property type="term" value="F:potassium channel regulator activity"/>
    <property type="evidence" value="ECO:0007669"/>
    <property type="project" value="UniProtKB-KW"/>
</dbReference>
<dbReference type="GO" id="GO:0090729">
    <property type="term" value="F:toxin activity"/>
    <property type="evidence" value="ECO:0007669"/>
    <property type="project" value="UniProtKB-KW"/>
</dbReference>
<dbReference type="Gene3D" id="2.20.20.10">
    <property type="entry name" value="Anthopleurin-A"/>
    <property type="match status" value="1"/>
</dbReference>
<dbReference type="InterPro" id="IPR012414">
    <property type="entry name" value="BDS_K_chnl_tox"/>
</dbReference>
<dbReference type="InterPro" id="IPR023355">
    <property type="entry name" value="Myo_ane_neurotoxin_sf"/>
</dbReference>
<dbReference type="Pfam" id="PF07936">
    <property type="entry name" value="Defensin_4"/>
    <property type="match status" value="1"/>
</dbReference>
<dbReference type="SUPFAM" id="SSF57392">
    <property type="entry name" value="Defensin-like"/>
    <property type="match status" value="1"/>
</dbReference>
<evidence type="ECO:0000250" key="1">
    <source>
        <dbReference type="UniProtKB" id="P61541"/>
    </source>
</evidence>
<evidence type="ECO:0000255" key="2"/>
<evidence type="ECO:0000269" key="3">
    <source>
    </source>
</evidence>
<evidence type="ECO:0000303" key="4">
    <source>
    </source>
</evidence>
<evidence type="ECO:0000303" key="5">
    <source>
    </source>
</evidence>
<evidence type="ECO:0000305" key="6"/>
<accession>G0W2H8</accession>
<comment type="function">
    <text evidence="1">Potently and selectively inhibits voltage-gated potassium channels Kv11/KCNH/ERG. Acts as a gating-modifier toxin that shifts the voltage-dependence of ERG activation in the positive direction and suppresses its current amplitudes elicited by strong depolarizing pulses that maximally activate the channels.</text>
</comment>
<comment type="subcellular location">
    <subcellularLocation>
        <location evidence="6">Secreted</location>
    </subcellularLocation>
    <subcellularLocation>
        <location evidence="6">Nematocyst</location>
    </subcellularLocation>
</comment>
<comment type="mass spectrometry"/>
<comment type="miscellaneous">
    <text evidence="3">Negative results: does not show effect on crabs.</text>
</comment>
<comment type="similarity">
    <text evidence="6">Belongs to the sea anemone type 3 (BDS) potassium channel toxin family.</text>
</comment>